<protein>
    <recommendedName>
        <fullName evidence="1">Isopentenyl-diphosphate Delta-isomerase</fullName>
        <shortName evidence="1">IPP isomerase</shortName>
        <ecNumber evidence="1">5.3.3.2</ecNumber>
    </recommendedName>
    <alternativeName>
        <fullName evidence="1">IPP:DMAPP isomerase</fullName>
    </alternativeName>
    <alternativeName>
        <fullName evidence="1">Isopentenyl pyrophosphate isomerase</fullName>
    </alternativeName>
</protein>
<feature type="chain" id="PRO_0000205240" description="Isopentenyl-diphosphate Delta-isomerase">
    <location>
        <begin position="1"/>
        <end position="206"/>
    </location>
</feature>
<feature type="domain" description="Nudix hydrolase">
    <location>
        <begin position="49"/>
        <end position="183"/>
    </location>
</feature>
<feature type="active site" evidence="1">
    <location>
        <position position="86"/>
    </location>
</feature>
<feature type="active site" evidence="1">
    <location>
        <position position="135"/>
    </location>
</feature>
<feature type="binding site" evidence="1">
    <location>
        <position position="44"/>
    </location>
    <ligand>
        <name>Mn(2+)</name>
        <dbReference type="ChEBI" id="CHEBI:29035"/>
    </ligand>
</feature>
<feature type="binding site" evidence="1">
    <location>
        <position position="51"/>
    </location>
    <ligand>
        <name>Mn(2+)</name>
        <dbReference type="ChEBI" id="CHEBI:29035"/>
    </ligand>
</feature>
<feature type="binding site" evidence="1">
    <location>
        <position position="86"/>
    </location>
    <ligand>
        <name>Mg(2+)</name>
        <dbReference type="ChEBI" id="CHEBI:18420"/>
    </ligand>
</feature>
<feature type="binding site" evidence="1">
    <location>
        <position position="88"/>
    </location>
    <ligand>
        <name>Mn(2+)</name>
        <dbReference type="ChEBI" id="CHEBI:29035"/>
    </ligand>
</feature>
<feature type="binding site" evidence="1">
    <location>
        <position position="106"/>
    </location>
    <ligand>
        <name>Mg(2+)</name>
        <dbReference type="ChEBI" id="CHEBI:18420"/>
    </ligand>
</feature>
<feature type="binding site" evidence="1">
    <location>
        <position position="133"/>
    </location>
    <ligand>
        <name>Mn(2+)</name>
        <dbReference type="ChEBI" id="CHEBI:29035"/>
    </ligand>
</feature>
<feature type="binding site" evidence="1">
    <location>
        <position position="135"/>
    </location>
    <ligand>
        <name>Mn(2+)</name>
        <dbReference type="ChEBI" id="CHEBI:29035"/>
    </ligand>
</feature>
<sequence length="206" mass="22158">MTDLSITPLPAQAAPVQPASSAELVVLLDEAGNQIGTAPKSSVHGADTALHLAFSCHVFDDDGRLLVTRRALGKVAWPGVWTNSFCGHPAPAEPLPHAVRRRAEFELGLELRDVEPVLPFFRYRATDASGIVEHEICPVYTARTSSVPAPHPDEVLDLAWVEPGELATAVRAAPWAFSPWLVLQAQLLPFLGGHADARVRTEALVS</sequence>
<accession>Q8KP37</accession>
<gene>
    <name evidence="1" type="primary">idi</name>
</gene>
<comment type="function">
    <text evidence="1">Catalyzes the 1,3-allylic rearrangement of the homoallylic substrate isopentenyl (IPP) to its highly electrophilic allylic isomer, dimethylallyl diphosphate (DMAPP).</text>
</comment>
<comment type="catalytic activity">
    <reaction evidence="1">
        <text>isopentenyl diphosphate = dimethylallyl diphosphate</text>
        <dbReference type="Rhea" id="RHEA:23284"/>
        <dbReference type="ChEBI" id="CHEBI:57623"/>
        <dbReference type="ChEBI" id="CHEBI:128769"/>
        <dbReference type="EC" id="5.3.3.2"/>
    </reaction>
</comment>
<comment type="cofactor">
    <cofactor evidence="1">
        <name>Mg(2+)</name>
        <dbReference type="ChEBI" id="CHEBI:18420"/>
    </cofactor>
    <text evidence="1">Binds 1 Mg(2+) ion per subunit. The magnesium ion binds only when substrate is bound.</text>
</comment>
<comment type="cofactor">
    <cofactor evidence="1">
        <name>Mn(2+)</name>
        <dbReference type="ChEBI" id="CHEBI:29035"/>
    </cofactor>
    <text evidence="1">Binds 1 Mn(2+) ion per subunit.</text>
</comment>
<comment type="pathway">
    <text evidence="1">Isoprenoid biosynthesis; dimethylallyl diphosphate biosynthesis; dimethylallyl diphosphate from isopentenyl diphosphate: step 1/1.</text>
</comment>
<comment type="subcellular location">
    <subcellularLocation>
        <location evidence="1">Cytoplasm</location>
    </subcellularLocation>
</comment>
<comment type="similarity">
    <text evidence="1">Belongs to the IPP isomerase type 1 family.</text>
</comment>
<evidence type="ECO:0000255" key="1">
    <source>
        <dbReference type="HAMAP-Rule" id="MF_00202"/>
    </source>
</evidence>
<organism>
    <name type="scientific">Agromyces mediolanus</name>
    <name type="common">Corynebacterium mediolanum</name>
    <dbReference type="NCBI Taxonomy" id="41986"/>
    <lineage>
        <taxon>Bacteria</taxon>
        <taxon>Bacillati</taxon>
        <taxon>Actinomycetota</taxon>
        <taxon>Actinomycetes</taxon>
        <taxon>Micrococcales</taxon>
        <taxon>Microbacteriaceae</taxon>
        <taxon>Agromyces</taxon>
    </lineage>
</organism>
<proteinExistence type="inferred from homology"/>
<reference key="1">
    <citation type="submission" date="2002-06" db="EMBL/GenBank/DDBJ databases">
        <title>Carotenoid biosynthesis.</title>
        <authorList>
            <person name="deSouza M.L."/>
            <person name="Jessen H."/>
            <person name="Schroeder W.A."/>
            <person name="Gokarn R.R."/>
        </authorList>
    </citation>
    <scope>NUCLEOTIDE SEQUENCE [GENOMIC DNA]</scope>
    <source>
        <strain>ATCC 13930 / DSM 40 / JCM 1376 / NBRC 15700 / A112</strain>
    </source>
</reference>
<keyword id="KW-0963">Cytoplasm</keyword>
<keyword id="KW-0413">Isomerase</keyword>
<keyword id="KW-0414">Isoprene biosynthesis</keyword>
<keyword id="KW-0460">Magnesium</keyword>
<keyword id="KW-0464">Manganese</keyword>
<keyword id="KW-0479">Metal-binding</keyword>
<dbReference type="EC" id="5.3.3.2" evidence="1"/>
<dbReference type="EMBL" id="AY124589">
    <property type="protein sequence ID" value="AAM94361.1"/>
    <property type="molecule type" value="Genomic_DNA"/>
</dbReference>
<dbReference type="SMR" id="Q8KP37"/>
<dbReference type="UniPathway" id="UPA00059">
    <property type="reaction ID" value="UER00104"/>
</dbReference>
<dbReference type="GO" id="GO:0005737">
    <property type="term" value="C:cytoplasm"/>
    <property type="evidence" value="ECO:0007669"/>
    <property type="project" value="UniProtKB-SubCell"/>
</dbReference>
<dbReference type="GO" id="GO:0004452">
    <property type="term" value="F:isopentenyl-diphosphate delta-isomerase activity"/>
    <property type="evidence" value="ECO:0007669"/>
    <property type="project" value="UniProtKB-UniRule"/>
</dbReference>
<dbReference type="GO" id="GO:0046872">
    <property type="term" value="F:metal ion binding"/>
    <property type="evidence" value="ECO:0007669"/>
    <property type="project" value="UniProtKB-KW"/>
</dbReference>
<dbReference type="GO" id="GO:0050992">
    <property type="term" value="P:dimethylallyl diphosphate biosynthetic process"/>
    <property type="evidence" value="ECO:0007669"/>
    <property type="project" value="UniProtKB-UniRule"/>
</dbReference>
<dbReference type="GO" id="GO:0008299">
    <property type="term" value="P:isoprenoid biosynthetic process"/>
    <property type="evidence" value="ECO:0007669"/>
    <property type="project" value="UniProtKB-KW"/>
</dbReference>
<dbReference type="CDD" id="cd02885">
    <property type="entry name" value="NUDIX_IPP_Isomerase"/>
    <property type="match status" value="1"/>
</dbReference>
<dbReference type="FunFam" id="3.90.79.10:FF:000009">
    <property type="entry name" value="Isopentenyl-diphosphate Delta-isomerase"/>
    <property type="match status" value="1"/>
</dbReference>
<dbReference type="Gene3D" id="3.90.79.10">
    <property type="entry name" value="Nucleoside Triphosphate Pyrophosphohydrolase"/>
    <property type="match status" value="1"/>
</dbReference>
<dbReference type="HAMAP" id="MF_00202">
    <property type="entry name" value="Idi"/>
    <property type="match status" value="1"/>
</dbReference>
<dbReference type="InterPro" id="IPR056375">
    <property type="entry name" value="Idi_bact"/>
</dbReference>
<dbReference type="InterPro" id="IPR011876">
    <property type="entry name" value="IsopentenylPP_isomerase_typ1"/>
</dbReference>
<dbReference type="InterPro" id="IPR015797">
    <property type="entry name" value="NUDIX_hydrolase-like_dom_sf"/>
</dbReference>
<dbReference type="InterPro" id="IPR000086">
    <property type="entry name" value="NUDIX_hydrolase_dom"/>
</dbReference>
<dbReference type="NCBIfam" id="TIGR02150">
    <property type="entry name" value="IPP_isom_1"/>
    <property type="match status" value="1"/>
</dbReference>
<dbReference type="NCBIfam" id="NF002995">
    <property type="entry name" value="PRK03759.1"/>
    <property type="match status" value="1"/>
</dbReference>
<dbReference type="PANTHER" id="PTHR10885">
    <property type="entry name" value="ISOPENTENYL-DIPHOSPHATE DELTA-ISOMERASE"/>
    <property type="match status" value="1"/>
</dbReference>
<dbReference type="PANTHER" id="PTHR10885:SF0">
    <property type="entry name" value="ISOPENTENYL-DIPHOSPHATE DELTA-ISOMERASE"/>
    <property type="match status" value="1"/>
</dbReference>
<dbReference type="Pfam" id="PF00293">
    <property type="entry name" value="NUDIX"/>
    <property type="match status" value="1"/>
</dbReference>
<dbReference type="PIRSF" id="PIRSF018427">
    <property type="entry name" value="Isopntndiph_ism"/>
    <property type="match status" value="1"/>
</dbReference>
<dbReference type="SUPFAM" id="SSF55811">
    <property type="entry name" value="Nudix"/>
    <property type="match status" value="1"/>
</dbReference>
<dbReference type="PROSITE" id="PS51462">
    <property type="entry name" value="NUDIX"/>
    <property type="match status" value="1"/>
</dbReference>
<name>IDI_AGRME</name>